<proteinExistence type="inferred from homology"/>
<protein>
    <recommendedName>
        <fullName evidence="1">Probable endonuclease 4</fullName>
        <ecNumber evidence="1">3.1.21.2</ecNumber>
    </recommendedName>
    <alternativeName>
        <fullName evidence="1">Endodeoxyribonuclease IV</fullName>
    </alternativeName>
    <alternativeName>
        <fullName evidence="1">Endonuclease IV</fullName>
    </alternativeName>
</protein>
<gene>
    <name evidence="1" type="primary">nfo</name>
    <name type="ordered locus">BU137</name>
</gene>
<keyword id="KW-0227">DNA damage</keyword>
<keyword id="KW-0234">DNA repair</keyword>
<keyword id="KW-0255">Endonuclease</keyword>
<keyword id="KW-0378">Hydrolase</keyword>
<keyword id="KW-0479">Metal-binding</keyword>
<keyword id="KW-0540">Nuclease</keyword>
<keyword id="KW-1185">Reference proteome</keyword>
<keyword id="KW-0862">Zinc</keyword>
<dbReference type="EC" id="3.1.21.2" evidence="1"/>
<dbReference type="EMBL" id="BA000003">
    <property type="protein sequence ID" value="BAB12855.1"/>
    <property type="molecule type" value="Genomic_DNA"/>
</dbReference>
<dbReference type="RefSeq" id="NP_239969.1">
    <property type="nucleotide sequence ID" value="NC_002528.1"/>
</dbReference>
<dbReference type="RefSeq" id="WP_009874093.1">
    <property type="nucleotide sequence ID" value="NZ_AP036055.1"/>
</dbReference>
<dbReference type="SMR" id="P57237"/>
<dbReference type="STRING" id="563178.BUAP5A_135"/>
<dbReference type="EnsemblBacteria" id="BAB12855">
    <property type="protein sequence ID" value="BAB12855"/>
    <property type="gene ID" value="BAB12855"/>
</dbReference>
<dbReference type="KEGG" id="buc:BU137"/>
<dbReference type="PATRIC" id="fig|107806.10.peg.146"/>
<dbReference type="eggNOG" id="COG0648">
    <property type="taxonomic scope" value="Bacteria"/>
</dbReference>
<dbReference type="HOGENOM" id="CLU_025885_0_4_6"/>
<dbReference type="Proteomes" id="UP000001806">
    <property type="component" value="Chromosome"/>
</dbReference>
<dbReference type="GO" id="GO:0008833">
    <property type="term" value="F:deoxyribonuclease IV (phage-T4-induced) activity"/>
    <property type="evidence" value="ECO:0007669"/>
    <property type="project" value="UniProtKB-UniRule"/>
</dbReference>
<dbReference type="GO" id="GO:0003677">
    <property type="term" value="F:DNA binding"/>
    <property type="evidence" value="ECO:0007669"/>
    <property type="project" value="InterPro"/>
</dbReference>
<dbReference type="GO" id="GO:0003906">
    <property type="term" value="F:DNA-(apurinic or apyrimidinic site) endonuclease activity"/>
    <property type="evidence" value="ECO:0007669"/>
    <property type="project" value="TreeGrafter"/>
</dbReference>
<dbReference type="GO" id="GO:0008081">
    <property type="term" value="F:phosphoric diester hydrolase activity"/>
    <property type="evidence" value="ECO:0007669"/>
    <property type="project" value="TreeGrafter"/>
</dbReference>
<dbReference type="GO" id="GO:0008270">
    <property type="term" value="F:zinc ion binding"/>
    <property type="evidence" value="ECO:0007669"/>
    <property type="project" value="UniProtKB-UniRule"/>
</dbReference>
<dbReference type="GO" id="GO:0006284">
    <property type="term" value="P:base-excision repair"/>
    <property type="evidence" value="ECO:0007669"/>
    <property type="project" value="TreeGrafter"/>
</dbReference>
<dbReference type="CDD" id="cd00019">
    <property type="entry name" value="AP2Ec"/>
    <property type="match status" value="1"/>
</dbReference>
<dbReference type="FunFam" id="3.20.20.150:FF:000001">
    <property type="entry name" value="Probable endonuclease 4"/>
    <property type="match status" value="1"/>
</dbReference>
<dbReference type="Gene3D" id="3.20.20.150">
    <property type="entry name" value="Divalent-metal-dependent TIM barrel enzymes"/>
    <property type="match status" value="1"/>
</dbReference>
<dbReference type="HAMAP" id="MF_00152">
    <property type="entry name" value="Nfo"/>
    <property type="match status" value="1"/>
</dbReference>
<dbReference type="InterPro" id="IPR001719">
    <property type="entry name" value="AP_endonuc_2"/>
</dbReference>
<dbReference type="InterPro" id="IPR018246">
    <property type="entry name" value="AP_endonuc_F2_Zn_BS"/>
</dbReference>
<dbReference type="InterPro" id="IPR036237">
    <property type="entry name" value="Xyl_isomerase-like_sf"/>
</dbReference>
<dbReference type="InterPro" id="IPR013022">
    <property type="entry name" value="Xyl_isomerase-like_TIM-brl"/>
</dbReference>
<dbReference type="NCBIfam" id="TIGR00587">
    <property type="entry name" value="nfo"/>
    <property type="match status" value="1"/>
</dbReference>
<dbReference type="NCBIfam" id="NF002199">
    <property type="entry name" value="PRK01060.1-4"/>
    <property type="match status" value="1"/>
</dbReference>
<dbReference type="PANTHER" id="PTHR21445:SF0">
    <property type="entry name" value="APURINIC-APYRIMIDINIC ENDONUCLEASE"/>
    <property type="match status" value="1"/>
</dbReference>
<dbReference type="PANTHER" id="PTHR21445">
    <property type="entry name" value="ENDONUCLEASE IV ENDODEOXYRIBONUCLEASE IV"/>
    <property type="match status" value="1"/>
</dbReference>
<dbReference type="Pfam" id="PF01261">
    <property type="entry name" value="AP_endonuc_2"/>
    <property type="match status" value="1"/>
</dbReference>
<dbReference type="SMART" id="SM00518">
    <property type="entry name" value="AP2Ec"/>
    <property type="match status" value="1"/>
</dbReference>
<dbReference type="SUPFAM" id="SSF51658">
    <property type="entry name" value="Xylose isomerase-like"/>
    <property type="match status" value="1"/>
</dbReference>
<dbReference type="PROSITE" id="PS00729">
    <property type="entry name" value="AP_NUCLEASE_F2_1"/>
    <property type="match status" value="1"/>
</dbReference>
<dbReference type="PROSITE" id="PS00730">
    <property type="entry name" value="AP_NUCLEASE_F2_2"/>
    <property type="match status" value="1"/>
</dbReference>
<dbReference type="PROSITE" id="PS00731">
    <property type="entry name" value="AP_NUCLEASE_F2_3"/>
    <property type="match status" value="1"/>
</dbReference>
<dbReference type="PROSITE" id="PS51432">
    <property type="entry name" value="AP_NUCLEASE_F2_4"/>
    <property type="match status" value="1"/>
</dbReference>
<name>END4_BUCAI</name>
<comment type="function">
    <text evidence="1">Endonuclease IV plays a role in DNA repair. It cleaves phosphodiester bonds at apurinic or apyrimidinic (AP) sites, generating a 3'-hydroxyl group and a 5'-terminal sugar phosphate.</text>
</comment>
<comment type="catalytic activity">
    <reaction evidence="1">
        <text>Endonucleolytic cleavage to 5'-phosphooligonucleotide end-products.</text>
        <dbReference type="EC" id="3.1.21.2"/>
    </reaction>
</comment>
<comment type="cofactor">
    <cofactor evidence="1">
        <name>Zn(2+)</name>
        <dbReference type="ChEBI" id="CHEBI:29105"/>
    </cofactor>
    <text evidence="1">Binds 3 Zn(2+) ions.</text>
</comment>
<comment type="similarity">
    <text evidence="1">Belongs to the AP endonuclease 2 family.</text>
</comment>
<reference key="1">
    <citation type="journal article" date="2000" name="Nature">
        <title>Genome sequence of the endocellular bacterial symbiont of aphids Buchnera sp. APS.</title>
        <authorList>
            <person name="Shigenobu S."/>
            <person name="Watanabe H."/>
            <person name="Hattori M."/>
            <person name="Sakaki Y."/>
            <person name="Ishikawa H."/>
        </authorList>
    </citation>
    <scope>NUCLEOTIDE SEQUENCE [LARGE SCALE GENOMIC DNA]</scope>
    <source>
        <strain>APS</strain>
    </source>
</reference>
<organism>
    <name type="scientific">Buchnera aphidicola subsp. Acyrthosiphon pisum (strain APS)</name>
    <name type="common">Acyrthosiphon pisum symbiotic bacterium</name>
    <dbReference type="NCBI Taxonomy" id="107806"/>
    <lineage>
        <taxon>Bacteria</taxon>
        <taxon>Pseudomonadati</taxon>
        <taxon>Pseudomonadota</taxon>
        <taxon>Gammaproteobacteria</taxon>
        <taxon>Enterobacterales</taxon>
        <taxon>Erwiniaceae</taxon>
        <taxon>Buchnera</taxon>
    </lineage>
</organism>
<accession>P57237</accession>
<evidence type="ECO:0000255" key="1">
    <source>
        <dbReference type="HAMAP-Rule" id="MF_00152"/>
    </source>
</evidence>
<sequence length="281" mass="32020">MNYIGAHVSSSGGLEKTVLRAIQIKATAFSFFTKNQRQWFSPPLIQKKIDQFKAMCIKYSFQPQQILPHSSYLINLGHPIDELLRKSRKSFIDEMIRCSQLGLIFLNFHPGSHLNKITENACLLRVSDSINIALEKTQNVIAVIENTAGQGTNIGYCFEHLSEIIKNIDDKSRVGVCIDTCHLFASGYDLRTKKDCENTFEKFNSLIGLKYLKGIHLNDSKKKINSRVDRHESLGLGEIGTAAFTWIIKNENFSNIPIILETANPMIWEEEIDWLRSQKKL</sequence>
<feature type="chain" id="PRO_0000190828" description="Probable endonuclease 4">
    <location>
        <begin position="1"/>
        <end position="281"/>
    </location>
</feature>
<feature type="binding site" evidence="1">
    <location>
        <position position="69"/>
    </location>
    <ligand>
        <name>Zn(2+)</name>
        <dbReference type="ChEBI" id="CHEBI:29105"/>
        <label>1</label>
    </ligand>
</feature>
<feature type="binding site" evidence="1">
    <location>
        <position position="109"/>
    </location>
    <ligand>
        <name>Zn(2+)</name>
        <dbReference type="ChEBI" id="CHEBI:29105"/>
        <label>1</label>
    </ligand>
</feature>
<feature type="binding site" evidence="1">
    <location>
        <position position="145"/>
    </location>
    <ligand>
        <name>Zn(2+)</name>
        <dbReference type="ChEBI" id="CHEBI:29105"/>
        <label>1</label>
    </ligand>
</feature>
<feature type="binding site" evidence="1">
    <location>
        <position position="145"/>
    </location>
    <ligand>
        <name>Zn(2+)</name>
        <dbReference type="ChEBI" id="CHEBI:29105"/>
        <label>2</label>
    </ligand>
</feature>
<feature type="binding site" evidence="1">
    <location>
        <position position="179"/>
    </location>
    <ligand>
        <name>Zn(2+)</name>
        <dbReference type="ChEBI" id="CHEBI:29105"/>
        <label>2</label>
    </ligand>
</feature>
<feature type="binding site" evidence="1">
    <location>
        <position position="182"/>
    </location>
    <ligand>
        <name>Zn(2+)</name>
        <dbReference type="ChEBI" id="CHEBI:29105"/>
        <label>3</label>
    </ligand>
</feature>
<feature type="binding site" evidence="1">
    <location>
        <position position="216"/>
    </location>
    <ligand>
        <name>Zn(2+)</name>
        <dbReference type="ChEBI" id="CHEBI:29105"/>
        <label>2</label>
    </ligand>
</feature>
<feature type="binding site" evidence="1">
    <location>
        <position position="229"/>
    </location>
    <ligand>
        <name>Zn(2+)</name>
        <dbReference type="ChEBI" id="CHEBI:29105"/>
        <label>3</label>
    </ligand>
</feature>
<feature type="binding site" evidence="1">
    <location>
        <position position="231"/>
    </location>
    <ligand>
        <name>Zn(2+)</name>
        <dbReference type="ChEBI" id="CHEBI:29105"/>
        <label>3</label>
    </ligand>
</feature>
<feature type="binding site" evidence="1">
    <location>
        <position position="261"/>
    </location>
    <ligand>
        <name>Zn(2+)</name>
        <dbReference type="ChEBI" id="CHEBI:29105"/>
        <label>2</label>
    </ligand>
</feature>